<gene>
    <name evidence="1" type="primary">ispE</name>
    <name type="ordered locus">Mpe_A3230</name>
</gene>
<keyword id="KW-0067">ATP-binding</keyword>
<keyword id="KW-0414">Isoprene biosynthesis</keyword>
<keyword id="KW-0418">Kinase</keyword>
<keyword id="KW-0547">Nucleotide-binding</keyword>
<keyword id="KW-1185">Reference proteome</keyword>
<keyword id="KW-0808">Transferase</keyword>
<sequence>MSLQALYDVPAPAKLNLFLHVTGRRDDGYHLLQSVFALIDWADTLHFERRLDGRLVRHDLAAALPEDDLCLRAARLLQRESACPLGADISIDKDVPWGAGLGGGSSDAASTLLALNRLWGLHWSRERLLALGLQLGADVPFFVGGHNAWVEGIGERLTPIELAPRWWAVLKPAVAVPTVAIFGSPLLVRNTAAATISDFSANAVEFGHNDLQTPAMAYSDEVVQALALLQSRYGASRMSGSGSAVFAEAGTGESPTVAMMEAASLPPSWVGRMCRGLTVHPLALWAG</sequence>
<evidence type="ECO:0000255" key="1">
    <source>
        <dbReference type="HAMAP-Rule" id="MF_00061"/>
    </source>
</evidence>
<reference key="1">
    <citation type="journal article" date="2007" name="J. Bacteriol.">
        <title>Whole-genome analysis of the methyl tert-butyl ether-degrading beta-proteobacterium Methylibium petroleiphilum PM1.</title>
        <authorList>
            <person name="Kane S.R."/>
            <person name="Chakicherla A.Y."/>
            <person name="Chain P.S.G."/>
            <person name="Schmidt R."/>
            <person name="Shin M.W."/>
            <person name="Legler T.C."/>
            <person name="Scow K.M."/>
            <person name="Larimer F.W."/>
            <person name="Lucas S.M."/>
            <person name="Richardson P.M."/>
            <person name="Hristova K.R."/>
        </authorList>
    </citation>
    <scope>NUCLEOTIDE SEQUENCE [LARGE SCALE GENOMIC DNA]</scope>
    <source>
        <strain>ATCC BAA-1232 / LMG 22953 / PM1</strain>
    </source>
</reference>
<name>ISPE_METPP</name>
<protein>
    <recommendedName>
        <fullName evidence="1">4-diphosphocytidyl-2-C-methyl-D-erythritol kinase</fullName>
        <shortName evidence="1">CMK</shortName>
        <ecNumber evidence="1">2.7.1.148</ecNumber>
    </recommendedName>
    <alternativeName>
        <fullName evidence="1">4-(cytidine-5'-diphospho)-2-C-methyl-D-erythritol kinase</fullName>
    </alternativeName>
</protein>
<proteinExistence type="inferred from homology"/>
<accession>A2SKU4</accession>
<dbReference type="EC" id="2.7.1.148" evidence="1"/>
<dbReference type="EMBL" id="CP000555">
    <property type="protein sequence ID" value="ABM96183.1"/>
    <property type="molecule type" value="Genomic_DNA"/>
</dbReference>
<dbReference type="RefSeq" id="WP_011830806.1">
    <property type="nucleotide sequence ID" value="NC_008825.1"/>
</dbReference>
<dbReference type="SMR" id="A2SKU4"/>
<dbReference type="STRING" id="420662.Mpe_A3230"/>
<dbReference type="KEGG" id="mpt:Mpe_A3230"/>
<dbReference type="eggNOG" id="COG1947">
    <property type="taxonomic scope" value="Bacteria"/>
</dbReference>
<dbReference type="HOGENOM" id="CLU_053057_3_0_4"/>
<dbReference type="UniPathway" id="UPA00056">
    <property type="reaction ID" value="UER00094"/>
</dbReference>
<dbReference type="Proteomes" id="UP000000366">
    <property type="component" value="Chromosome"/>
</dbReference>
<dbReference type="GO" id="GO:0050515">
    <property type="term" value="F:4-(cytidine 5'-diphospho)-2-C-methyl-D-erythritol kinase activity"/>
    <property type="evidence" value="ECO:0007669"/>
    <property type="project" value="UniProtKB-UniRule"/>
</dbReference>
<dbReference type="GO" id="GO:0005524">
    <property type="term" value="F:ATP binding"/>
    <property type="evidence" value="ECO:0007669"/>
    <property type="project" value="UniProtKB-UniRule"/>
</dbReference>
<dbReference type="GO" id="GO:0019288">
    <property type="term" value="P:isopentenyl diphosphate biosynthetic process, methylerythritol 4-phosphate pathway"/>
    <property type="evidence" value="ECO:0007669"/>
    <property type="project" value="UniProtKB-UniRule"/>
</dbReference>
<dbReference type="GO" id="GO:0016114">
    <property type="term" value="P:terpenoid biosynthetic process"/>
    <property type="evidence" value="ECO:0007669"/>
    <property type="project" value="InterPro"/>
</dbReference>
<dbReference type="Gene3D" id="3.30.230.10">
    <property type="match status" value="1"/>
</dbReference>
<dbReference type="Gene3D" id="3.30.70.890">
    <property type="entry name" value="GHMP kinase, C-terminal domain"/>
    <property type="match status" value="1"/>
</dbReference>
<dbReference type="HAMAP" id="MF_00061">
    <property type="entry name" value="IspE"/>
    <property type="match status" value="1"/>
</dbReference>
<dbReference type="InterPro" id="IPR013750">
    <property type="entry name" value="GHMP_kinase_C_dom"/>
</dbReference>
<dbReference type="InterPro" id="IPR036554">
    <property type="entry name" value="GHMP_kinase_C_sf"/>
</dbReference>
<dbReference type="InterPro" id="IPR006204">
    <property type="entry name" value="GHMP_kinase_N_dom"/>
</dbReference>
<dbReference type="InterPro" id="IPR004424">
    <property type="entry name" value="IspE"/>
</dbReference>
<dbReference type="InterPro" id="IPR020568">
    <property type="entry name" value="Ribosomal_Su5_D2-typ_SF"/>
</dbReference>
<dbReference type="InterPro" id="IPR014721">
    <property type="entry name" value="Ribsml_uS5_D2-typ_fold_subgr"/>
</dbReference>
<dbReference type="NCBIfam" id="TIGR00154">
    <property type="entry name" value="ispE"/>
    <property type="match status" value="1"/>
</dbReference>
<dbReference type="PANTHER" id="PTHR43527">
    <property type="entry name" value="4-DIPHOSPHOCYTIDYL-2-C-METHYL-D-ERYTHRITOL KINASE, CHLOROPLASTIC"/>
    <property type="match status" value="1"/>
</dbReference>
<dbReference type="PANTHER" id="PTHR43527:SF2">
    <property type="entry name" value="4-DIPHOSPHOCYTIDYL-2-C-METHYL-D-ERYTHRITOL KINASE, CHLOROPLASTIC"/>
    <property type="match status" value="1"/>
</dbReference>
<dbReference type="Pfam" id="PF08544">
    <property type="entry name" value="GHMP_kinases_C"/>
    <property type="match status" value="1"/>
</dbReference>
<dbReference type="Pfam" id="PF00288">
    <property type="entry name" value="GHMP_kinases_N"/>
    <property type="match status" value="1"/>
</dbReference>
<dbReference type="PIRSF" id="PIRSF010376">
    <property type="entry name" value="IspE"/>
    <property type="match status" value="1"/>
</dbReference>
<dbReference type="SUPFAM" id="SSF55060">
    <property type="entry name" value="GHMP Kinase, C-terminal domain"/>
    <property type="match status" value="1"/>
</dbReference>
<dbReference type="SUPFAM" id="SSF54211">
    <property type="entry name" value="Ribosomal protein S5 domain 2-like"/>
    <property type="match status" value="1"/>
</dbReference>
<feature type="chain" id="PRO_1000007860" description="4-diphosphocytidyl-2-C-methyl-D-erythritol kinase">
    <location>
        <begin position="1"/>
        <end position="287"/>
    </location>
</feature>
<feature type="active site" evidence="1">
    <location>
        <position position="14"/>
    </location>
</feature>
<feature type="active site" evidence="1">
    <location>
        <position position="138"/>
    </location>
</feature>
<feature type="binding site" evidence="1">
    <location>
        <begin position="96"/>
        <end position="106"/>
    </location>
    <ligand>
        <name>ATP</name>
        <dbReference type="ChEBI" id="CHEBI:30616"/>
    </ligand>
</feature>
<organism>
    <name type="scientific">Methylibium petroleiphilum (strain ATCC BAA-1232 / LMG 22953 / PM1)</name>
    <dbReference type="NCBI Taxonomy" id="420662"/>
    <lineage>
        <taxon>Bacteria</taxon>
        <taxon>Pseudomonadati</taxon>
        <taxon>Pseudomonadota</taxon>
        <taxon>Betaproteobacteria</taxon>
        <taxon>Burkholderiales</taxon>
        <taxon>Sphaerotilaceae</taxon>
        <taxon>Methylibium</taxon>
    </lineage>
</organism>
<comment type="function">
    <text evidence="1">Catalyzes the phosphorylation of the position 2 hydroxy group of 4-diphosphocytidyl-2C-methyl-D-erythritol.</text>
</comment>
<comment type="catalytic activity">
    <reaction evidence="1">
        <text>4-CDP-2-C-methyl-D-erythritol + ATP = 4-CDP-2-C-methyl-D-erythritol 2-phosphate + ADP + H(+)</text>
        <dbReference type="Rhea" id="RHEA:18437"/>
        <dbReference type="ChEBI" id="CHEBI:15378"/>
        <dbReference type="ChEBI" id="CHEBI:30616"/>
        <dbReference type="ChEBI" id="CHEBI:57823"/>
        <dbReference type="ChEBI" id="CHEBI:57919"/>
        <dbReference type="ChEBI" id="CHEBI:456216"/>
        <dbReference type="EC" id="2.7.1.148"/>
    </reaction>
</comment>
<comment type="pathway">
    <text evidence="1">Isoprenoid biosynthesis; isopentenyl diphosphate biosynthesis via DXP pathway; isopentenyl diphosphate from 1-deoxy-D-xylulose 5-phosphate: step 3/6.</text>
</comment>
<comment type="similarity">
    <text evidence="1">Belongs to the GHMP kinase family. IspE subfamily.</text>
</comment>